<organism>
    <name type="scientific">Thermofilum pendens (strain DSM 2475 / Hrk 5)</name>
    <dbReference type="NCBI Taxonomy" id="368408"/>
    <lineage>
        <taxon>Archaea</taxon>
        <taxon>Thermoproteota</taxon>
        <taxon>Thermoprotei</taxon>
        <taxon>Thermofilales</taxon>
        <taxon>Thermofilaceae</taxon>
        <taxon>Thermofilum</taxon>
    </lineage>
</organism>
<protein>
    <recommendedName>
        <fullName evidence="1">tRNA(Ile2) 2-agmatinylcytidine synthetase TiaS</fullName>
        <shortName evidence="1">tRNA(Ile2)-agm2C synthetase</shortName>
        <ecNumber evidence="1">6.3.4.22</ecNumber>
    </recommendedName>
    <alternativeName>
        <fullName evidence="1">tRNA(Ile2) agmatidine synthetase</fullName>
    </alternativeName>
</protein>
<proteinExistence type="inferred from homology"/>
<feature type="chain" id="PRO_0000407305" description="tRNA(Ile2) 2-agmatinylcytidine synthetase TiaS">
    <location>
        <begin position="1"/>
        <end position="445"/>
    </location>
</feature>
<feature type="DNA-binding region" description="OB" evidence="1">
    <location>
        <begin position="278"/>
        <end position="349"/>
    </location>
</feature>
<sequence>MGLTSVHVGLDDTDSPLGLCTTFVALAIVREASRIGAGFADLPYLVRLNPNVPLKTRGNGAVAIHFLVEEELVPRVEEAVVRALDDLSERHGKTDPAAILVKGDVPRAFRSVYLRALTEFIPSSYVRSVLERFKGESVKLLYSRSKRPRGLVGAVASLGAYPLEDYTYELIVYRSPEERSESRDISEDLLLELDRKYRPLVFATYDYSSRRVLAVPHGPDPVIFGLRSLDPEILVNVAVDVLEKISHAGYLLFKTNQGTSAHLQRYKPVALVRPYDSVVVRGSVAEKPTVISGGHVIVNVCDETGCLQIAFYKETGRLNRVAKLLSRGDLVEVGGGVMKKDGLVLNAEYLRLIKPALNVKRLNPLCPKCGSRMTSAGKGKGYKCPKCGYRAKEAAKIYRVAPRTLEPGTYFQSPSAYRHLTKPPEILGLRPVDATKVLLSGMWFM</sequence>
<gene>
    <name evidence="1" type="primary">tiaS</name>
    <name type="ordered locus">Tpen_0604</name>
</gene>
<reference key="1">
    <citation type="journal article" date="2008" name="J. Bacteriol.">
        <title>Genome sequence of Thermofilum pendens reveals an exceptional loss of biosynthetic pathways without genome reduction.</title>
        <authorList>
            <person name="Anderson I."/>
            <person name="Rodriguez J."/>
            <person name="Susanti D."/>
            <person name="Porat I."/>
            <person name="Reich C."/>
            <person name="Ulrich L.E."/>
            <person name="Elkins J.G."/>
            <person name="Mavromatis K."/>
            <person name="Lykidis A."/>
            <person name="Kim E."/>
            <person name="Thompson L.S."/>
            <person name="Nolan M."/>
            <person name="Land M."/>
            <person name="Copeland A."/>
            <person name="Lapidus A."/>
            <person name="Lucas S."/>
            <person name="Detter C."/>
            <person name="Zhulin I.B."/>
            <person name="Olsen G.J."/>
            <person name="Whitman W."/>
            <person name="Mukhopadhyay B."/>
            <person name="Bristow J."/>
            <person name="Kyrpides N."/>
        </authorList>
    </citation>
    <scope>NUCLEOTIDE SEQUENCE [LARGE SCALE GENOMIC DNA]</scope>
    <source>
        <strain>DSM 2475 / Hrk 5</strain>
    </source>
</reference>
<comment type="function">
    <text evidence="1">ATP-dependent agmatine transferase that catalyzes the formation of 2-agmatinylcytidine (agm2C) at the wobble position (C34) of tRNA(Ile2), converting the codon specificity from AUG to AUA.</text>
</comment>
<comment type="catalytic activity">
    <reaction evidence="1">
        <text>cytidine(34) in tRNA(Ile2) + agmatine + ATP + H2O = 2-agmatinylcytidine(34) in tRNA(Ile2) + AMP + 2 phosphate + 2 H(+)</text>
        <dbReference type="Rhea" id="RHEA:43608"/>
        <dbReference type="Rhea" id="RHEA-COMP:10625"/>
        <dbReference type="Rhea" id="RHEA-COMP:10626"/>
        <dbReference type="ChEBI" id="CHEBI:15377"/>
        <dbReference type="ChEBI" id="CHEBI:15378"/>
        <dbReference type="ChEBI" id="CHEBI:30616"/>
        <dbReference type="ChEBI" id="CHEBI:43474"/>
        <dbReference type="ChEBI" id="CHEBI:58145"/>
        <dbReference type="ChEBI" id="CHEBI:82748"/>
        <dbReference type="ChEBI" id="CHEBI:83545"/>
        <dbReference type="ChEBI" id="CHEBI:456215"/>
        <dbReference type="EC" id="6.3.4.22"/>
    </reaction>
</comment>
<comment type="subcellular location">
    <subcellularLocation>
        <location evidence="1">Cytoplasm</location>
    </subcellularLocation>
</comment>
<comment type="similarity">
    <text evidence="1">Belongs to the TiaS family.</text>
</comment>
<keyword id="KW-0067">ATP-binding</keyword>
<keyword id="KW-0963">Cytoplasm</keyword>
<keyword id="KW-0436">Ligase</keyword>
<keyword id="KW-0547">Nucleotide-binding</keyword>
<keyword id="KW-1185">Reference proteome</keyword>
<keyword id="KW-0819">tRNA processing</keyword>
<dbReference type="EC" id="6.3.4.22" evidence="1"/>
<dbReference type="EMBL" id="CP000505">
    <property type="protein sequence ID" value="ABL78009.1"/>
    <property type="molecule type" value="Genomic_DNA"/>
</dbReference>
<dbReference type="RefSeq" id="WP_011752274.1">
    <property type="nucleotide sequence ID" value="NC_008698.1"/>
</dbReference>
<dbReference type="SMR" id="A1RXS9"/>
<dbReference type="STRING" id="368408.Tpen_0604"/>
<dbReference type="EnsemblBacteria" id="ABL78009">
    <property type="protein sequence ID" value="ABL78009"/>
    <property type="gene ID" value="Tpen_0604"/>
</dbReference>
<dbReference type="GeneID" id="4601224"/>
<dbReference type="KEGG" id="tpe:Tpen_0604"/>
<dbReference type="eggNOG" id="arCOG01115">
    <property type="taxonomic scope" value="Archaea"/>
</dbReference>
<dbReference type="HOGENOM" id="CLU_675459_0_0_2"/>
<dbReference type="OrthoDB" id="39189at2157"/>
<dbReference type="Proteomes" id="UP000000641">
    <property type="component" value="Chromosome"/>
</dbReference>
<dbReference type="GO" id="GO:0005737">
    <property type="term" value="C:cytoplasm"/>
    <property type="evidence" value="ECO:0007669"/>
    <property type="project" value="UniProtKB-SubCell"/>
</dbReference>
<dbReference type="GO" id="GO:0005524">
    <property type="term" value="F:ATP binding"/>
    <property type="evidence" value="ECO:0007669"/>
    <property type="project" value="UniProtKB-KW"/>
</dbReference>
<dbReference type="GO" id="GO:0016879">
    <property type="term" value="F:ligase activity, forming carbon-nitrogen bonds"/>
    <property type="evidence" value="ECO:0007669"/>
    <property type="project" value="UniProtKB-UniRule"/>
</dbReference>
<dbReference type="GO" id="GO:0003676">
    <property type="term" value="F:nucleic acid binding"/>
    <property type="evidence" value="ECO:0007669"/>
    <property type="project" value="InterPro"/>
</dbReference>
<dbReference type="GO" id="GO:0002101">
    <property type="term" value="P:tRNA wobble cytosine modification"/>
    <property type="evidence" value="ECO:0007669"/>
    <property type="project" value="UniProtKB-UniRule"/>
</dbReference>
<dbReference type="CDD" id="cd04482">
    <property type="entry name" value="RPA2_OBF_like"/>
    <property type="match status" value="1"/>
</dbReference>
<dbReference type="Gene3D" id="2.40.50.1010">
    <property type="match status" value="1"/>
</dbReference>
<dbReference type="Gene3D" id="3.30.70.2200">
    <property type="match status" value="1"/>
</dbReference>
<dbReference type="Gene3D" id="3.90.600.20">
    <property type="match status" value="1"/>
</dbReference>
<dbReference type="HAMAP" id="MF_01892">
    <property type="entry name" value="tRNA_Ile2_agm2C_synt"/>
    <property type="match status" value="1"/>
</dbReference>
<dbReference type="InterPro" id="IPR004365">
    <property type="entry name" value="NA-bd_OB_tRNA"/>
</dbReference>
<dbReference type="InterPro" id="IPR053870">
    <property type="entry name" value="TiaS-like_TCKD"/>
</dbReference>
<dbReference type="InterPro" id="IPR013696">
    <property type="entry name" value="TiaS_FLD"/>
</dbReference>
<dbReference type="InterPro" id="IPR024913">
    <property type="entry name" value="tRNA_Ile2__agm2C_synt"/>
</dbReference>
<dbReference type="InterPro" id="IPR055394">
    <property type="entry name" value="Zn_ribbon_TiaS"/>
</dbReference>
<dbReference type="PANTHER" id="PTHR40705:SF2">
    <property type="entry name" value="DUF1743 DOMAIN-CONTAINING PROTEIN"/>
    <property type="match status" value="1"/>
</dbReference>
<dbReference type="PANTHER" id="PTHR40705">
    <property type="entry name" value="TRNA(ILE2) 2-AGMATINYLCYTIDINE SYNTHETASE TIAS"/>
    <property type="match status" value="1"/>
</dbReference>
<dbReference type="Pfam" id="PF08489">
    <property type="entry name" value="TiaS_FLD"/>
    <property type="match status" value="1"/>
</dbReference>
<dbReference type="Pfam" id="PF22641">
    <property type="entry name" value="TiaS_TCKD"/>
    <property type="match status" value="1"/>
</dbReference>
<dbReference type="Pfam" id="PF01336">
    <property type="entry name" value="tRNA_anti-codon"/>
    <property type="match status" value="1"/>
</dbReference>
<dbReference type="Pfam" id="PF23783">
    <property type="entry name" value="Zn_ribbon_TiaS"/>
    <property type="match status" value="1"/>
</dbReference>
<accession>A1RXS9</accession>
<evidence type="ECO:0000255" key="1">
    <source>
        <dbReference type="HAMAP-Rule" id="MF_01892"/>
    </source>
</evidence>
<name>TIAS_THEPD</name>